<protein>
    <recommendedName>
        <fullName>Replication-associated protein A</fullName>
        <shortName>RepA</shortName>
        <ecNumber>3.1.21.-</ecNumber>
    </recommendedName>
</protein>
<keyword id="KW-0010">Activator</keyword>
<keyword id="KW-0025">Alternative splicing</keyword>
<keyword id="KW-0190">Covalent protein-DNA linkage</keyword>
<keyword id="KW-0235">DNA replication</keyword>
<keyword id="KW-0238">DNA-binding</keyword>
<keyword id="KW-0255">Endonuclease</keyword>
<keyword id="KW-1078">G1/S host cell cycle checkpoint dysregulation by virus</keyword>
<keyword id="KW-1035">Host cytoplasm</keyword>
<keyword id="KW-1048">Host nucleus</keyword>
<keyword id="KW-0945">Host-virus interaction</keyword>
<keyword id="KW-0378">Hydrolase</keyword>
<keyword id="KW-0479">Metal-binding</keyword>
<keyword id="KW-1121">Modulation of host cell cycle by virus</keyword>
<keyword id="KW-0540">Nuclease</keyword>
<keyword id="KW-0547">Nucleotide-binding</keyword>
<keyword id="KW-0548">Nucleotidyltransferase</keyword>
<keyword id="KW-1185">Reference proteome</keyword>
<keyword id="KW-0678">Repressor</keyword>
<keyword id="KW-0808">Transferase</keyword>
<comment type="function">
    <text evidence="1">Implicated in enhancement of V-sense gene expression. Acts a an inhibitor of C-sense gene transcription (By similarity).</text>
</comment>
<comment type="subunit">
    <text evidence="1">Homooligomer. Part of the C- and V-complexes which are RepA-Rep-DNA complexes involved in the c-sense and v-sense transcription (By similarity).</text>
</comment>
<comment type="subcellular location">
    <subcellularLocation>
        <location evidence="1">Host nucleus</location>
    </subcellularLocation>
    <subcellularLocation>
        <location evidence="1">Host cytoplasm</location>
    </subcellularLocation>
</comment>
<comment type="alternative products">
    <event type="alternative splicing"/>
    <isoform>
        <id>P18921-1</id>
        <name>RepA</name>
        <sequence type="displayed"/>
    </isoform>
    <isoform>
        <id>P18919-1</id>
        <name>Rep</name>
        <sequence type="external"/>
    </isoform>
</comment>
<comment type="domain">
    <text>There are 3 rolling circle replication (RCR) motifs. RCR-2 may be involved in metal coordination. RCR-3 is required for phosphodiester bond cleavage for initiation of RCR.</text>
</comment>
<comment type="miscellaneous">
    <molecule>Isoform RepA</molecule>
    <text>Produced from the unspliced transcript.</text>
</comment>
<comment type="similarity">
    <text evidence="5">Belongs to the geminiviridae Rep protein family.</text>
</comment>
<dbReference type="EC" id="3.1.21.-"/>
<dbReference type="EMBL" id="M20021">
    <property type="status" value="NOT_ANNOTATED_CDS"/>
    <property type="molecule type" value="Genomic_DNA"/>
</dbReference>
<dbReference type="PIR" id="JU0043">
    <property type="entry name" value="JU0043"/>
</dbReference>
<dbReference type="SMR" id="P18921"/>
<dbReference type="Proteomes" id="UP000203767">
    <property type="component" value="Genome"/>
</dbReference>
<dbReference type="GO" id="GO:0030430">
    <property type="term" value="C:host cell cytoplasm"/>
    <property type="evidence" value="ECO:0007669"/>
    <property type="project" value="UniProtKB-SubCell"/>
</dbReference>
<dbReference type="GO" id="GO:0042025">
    <property type="term" value="C:host cell nucleus"/>
    <property type="evidence" value="ECO:0007669"/>
    <property type="project" value="UniProtKB-SubCell"/>
</dbReference>
<dbReference type="GO" id="GO:0003677">
    <property type="term" value="F:DNA binding"/>
    <property type="evidence" value="ECO:0007669"/>
    <property type="project" value="UniProtKB-KW"/>
</dbReference>
<dbReference type="GO" id="GO:0016888">
    <property type="term" value="F:endodeoxyribonuclease activity, producing 5'-phosphomonoesters"/>
    <property type="evidence" value="ECO:0007669"/>
    <property type="project" value="InterPro"/>
</dbReference>
<dbReference type="GO" id="GO:0046872">
    <property type="term" value="F:metal ion binding"/>
    <property type="evidence" value="ECO:0007669"/>
    <property type="project" value="UniProtKB-KW"/>
</dbReference>
<dbReference type="GO" id="GO:0000166">
    <property type="term" value="F:nucleotide binding"/>
    <property type="evidence" value="ECO:0007669"/>
    <property type="project" value="UniProtKB-KW"/>
</dbReference>
<dbReference type="GO" id="GO:0016779">
    <property type="term" value="F:nucleotidyltransferase activity"/>
    <property type="evidence" value="ECO:0007669"/>
    <property type="project" value="UniProtKB-KW"/>
</dbReference>
<dbReference type="GO" id="GO:0005198">
    <property type="term" value="F:structural molecule activity"/>
    <property type="evidence" value="ECO:0007669"/>
    <property type="project" value="InterPro"/>
</dbReference>
<dbReference type="GO" id="GO:0006260">
    <property type="term" value="P:DNA replication"/>
    <property type="evidence" value="ECO:0007669"/>
    <property type="project" value="UniProtKB-KW"/>
</dbReference>
<dbReference type="GO" id="GO:0039645">
    <property type="term" value="P:symbiont-mediated perturbation of host cell cycle G1/S transition checkpoint"/>
    <property type="evidence" value="ECO:0007669"/>
    <property type="project" value="UniProtKB-KW"/>
</dbReference>
<dbReference type="Gene3D" id="3.40.1310.20">
    <property type="match status" value="1"/>
</dbReference>
<dbReference type="InterPro" id="IPR049912">
    <property type="entry name" value="CRESS_DNA_REP"/>
</dbReference>
<dbReference type="InterPro" id="IPR001146">
    <property type="entry name" value="Gemini_AL1_MSV"/>
</dbReference>
<dbReference type="InterPro" id="IPR001191">
    <property type="entry name" value="Gemini_AL1_REP"/>
</dbReference>
<dbReference type="InterPro" id="IPR022692">
    <property type="entry name" value="Gemini_AL1_REP_central"/>
</dbReference>
<dbReference type="Pfam" id="PF00799">
    <property type="entry name" value="Gemini_AL1"/>
    <property type="match status" value="1"/>
</dbReference>
<dbReference type="Pfam" id="PF08283">
    <property type="entry name" value="Gemini_AL1_M"/>
    <property type="match status" value="1"/>
</dbReference>
<dbReference type="PRINTS" id="PR00227">
    <property type="entry name" value="GEMCOATAL1"/>
</dbReference>
<dbReference type="PRINTS" id="PR00229">
    <property type="entry name" value="GEMCOATMSVL1"/>
</dbReference>
<dbReference type="SUPFAM" id="SSF55464">
    <property type="entry name" value="Origin of replication-binding domain, RBD-like"/>
    <property type="match status" value="1"/>
</dbReference>
<dbReference type="PROSITE" id="PS52020">
    <property type="entry name" value="CRESS_DNA_REP"/>
    <property type="match status" value="1"/>
</dbReference>
<reference key="1">
    <citation type="journal article" date="1988" name="Virology">
        <title>Nucleotide sequence of the geminivirus chloris striate mosaic virus.</title>
        <authorList>
            <person name="Andersen M.T."/>
            <person name="Richardson K.A."/>
            <person name="Harbison S.A."/>
            <person name="Morris B.A.M."/>
        </authorList>
    </citation>
    <scope>NUCLEOTIDE SEQUENCE [GENOMIC DNA]</scope>
</reference>
<organismHost>
    <name type="scientific">Avena sativa</name>
    <name type="common">Oat</name>
    <dbReference type="NCBI Taxonomy" id="4498"/>
</organismHost>
<organismHost>
    <name type="scientific">Chloris gayana</name>
    <dbReference type="NCBI Taxonomy" id="110876"/>
</organismHost>
<organismHost>
    <name type="scientific">Dactylis glomerata</name>
    <name type="common">Orchard grass</name>
    <name type="synonym">Cock's-foot grass</name>
    <dbReference type="NCBI Taxonomy" id="4509"/>
</organismHost>
<organismHost>
    <name type="scientific">Hordeum vulgare</name>
    <name type="common">Barley</name>
    <dbReference type="NCBI Taxonomy" id="4513"/>
</organismHost>
<organismHost>
    <name type="scientific">Ixophorus unisetus</name>
    <dbReference type="NCBI Taxonomy" id="279312"/>
</organismHost>
<organismHost>
    <name type="scientific">Triticum</name>
    <dbReference type="NCBI Taxonomy" id="4564"/>
</organismHost>
<organismHost>
    <name type="scientific">Zea mays</name>
    <name type="common">Maize</name>
    <dbReference type="NCBI Taxonomy" id="4577"/>
</organismHost>
<sequence>MSSLPVSESEGEGSGTSVQVPSRGGQVTPGEKAFSLRTKHVFLTYPRCPISPEEAGQKIADRLKNKKCNYIYISREFHADGEPHLHAFVQLEANFRTTSPKYFDLDEFHPNIQAARQPASTLKYCMKHPESSWEFGKFLKPKVNRSPTQSASRDKTMKQIMANATSRDEYLSMVRKSFPFEWAVRLQQFQYSANALFPDPPQTYSAPYASRDMSDHPVIGEWLQQELYTVSPQALSLHAGISEEQARIDLQWMSDLTRSGALESGDEACTSVGQQELERLLGPEVLELITTGSTQ</sequence>
<feature type="chain" id="PRO_0000222205" description="Replication-associated protein A">
    <location>
        <begin position="1"/>
        <end position="295"/>
    </location>
</feature>
<feature type="domain" description="CRESS-DNA virus Rep endonuclease" evidence="3">
    <location>
        <begin position="35"/>
        <end position="138"/>
    </location>
</feature>
<feature type="region of interest" description="Disordered" evidence="4">
    <location>
        <begin position="1"/>
        <end position="31"/>
    </location>
</feature>
<feature type="region of interest" description="Oligomerization" evidence="1">
    <location>
        <begin position="192"/>
        <end position="204"/>
    </location>
</feature>
<feature type="short sequence motif" description="RCR-1" evidence="3">
    <location>
        <begin position="42"/>
        <end position="45"/>
    </location>
</feature>
<feature type="short sequence motif" description="RCR-2" evidence="3">
    <location>
        <begin position="84"/>
        <end position="86"/>
    </location>
</feature>
<feature type="short sequence motif" description="RCR-3" evidence="3">
    <location>
        <begin position="124"/>
        <end position="127"/>
    </location>
</feature>
<feature type="active site" description="For DNA cleavage activity" evidence="3">
    <location>
        <position position="124"/>
    </location>
</feature>
<feature type="binding site" evidence="2">
    <location>
        <position position="76"/>
    </location>
    <ligand>
        <name>a divalent metal cation</name>
        <dbReference type="ChEBI" id="CHEBI:60240"/>
    </ligand>
</feature>
<feature type="binding site" evidence="2">
    <location>
        <position position="84"/>
    </location>
    <ligand>
        <name>a divalent metal cation</name>
        <dbReference type="ChEBI" id="CHEBI:60240"/>
    </ligand>
</feature>
<feature type="binding site" evidence="2">
    <location>
        <position position="86"/>
    </location>
    <ligand>
        <name>a divalent metal cation</name>
        <dbReference type="ChEBI" id="CHEBI:60240"/>
    </ligand>
</feature>
<proteinExistence type="inferred from homology"/>
<accession>P18921</accession>
<gene>
    <name type="ORF">C1</name>
</gene>
<organism>
    <name type="scientific">Chloris striate mosaic virus</name>
    <name type="common">CSMV</name>
    <dbReference type="NCBI Taxonomy" id="10820"/>
    <lineage>
        <taxon>Viruses</taxon>
        <taxon>Monodnaviria</taxon>
        <taxon>Shotokuvirae</taxon>
        <taxon>Cressdnaviricota</taxon>
        <taxon>Repensiviricetes</taxon>
        <taxon>Geplafuvirales</taxon>
        <taxon>Geminiviridae</taxon>
        <taxon>Mastrevirus</taxon>
    </lineage>
</organism>
<name>REPA_CSMV</name>
<evidence type="ECO:0000250" key="1"/>
<evidence type="ECO:0000255" key="2"/>
<evidence type="ECO:0000255" key="3">
    <source>
        <dbReference type="PROSITE-ProRule" id="PRU01364"/>
    </source>
</evidence>
<evidence type="ECO:0000256" key="4">
    <source>
        <dbReference type="SAM" id="MobiDB-lite"/>
    </source>
</evidence>
<evidence type="ECO:0000305" key="5"/>